<evidence type="ECO:0000250" key="1">
    <source>
        <dbReference type="UniProtKB" id="A2XDA1"/>
    </source>
</evidence>
<evidence type="ECO:0000255" key="2"/>
<evidence type="ECO:0000269" key="3">
    <source>
    </source>
</evidence>
<evidence type="ECO:0000269" key="4">
    <source>
    </source>
</evidence>
<evidence type="ECO:0000305" key="5"/>
<name>PDS_CAPAN</name>
<keyword id="KW-0125">Carotenoid biosynthesis</keyword>
<keyword id="KW-0150">Chloroplast</keyword>
<keyword id="KW-0957">Chromoplast</keyword>
<keyword id="KW-0359">Herbicide resistance</keyword>
<keyword id="KW-0472">Membrane</keyword>
<keyword id="KW-0560">Oxidoreductase</keyword>
<keyword id="KW-0934">Plastid</keyword>
<keyword id="KW-0809">Transit peptide</keyword>
<dbReference type="EC" id="1.3.5.5" evidence="3 4"/>
<dbReference type="EMBL" id="X68058">
    <property type="protein sequence ID" value="CAA48195.1"/>
    <property type="molecule type" value="mRNA"/>
</dbReference>
<dbReference type="PIR" id="S29314">
    <property type="entry name" value="S29314"/>
</dbReference>
<dbReference type="RefSeq" id="NP_001311742.1">
    <property type="nucleotide sequence ID" value="NM_001324813.1"/>
</dbReference>
<dbReference type="SMR" id="P80093"/>
<dbReference type="GeneID" id="107861625"/>
<dbReference type="KEGG" id="cann:107861625"/>
<dbReference type="OrthoDB" id="5046242at2759"/>
<dbReference type="UniPathway" id="UPA00803"/>
<dbReference type="GO" id="GO:0009507">
    <property type="term" value="C:chloroplast"/>
    <property type="evidence" value="ECO:0000314"/>
    <property type="project" value="UniProtKB"/>
</dbReference>
<dbReference type="GO" id="GO:0009509">
    <property type="term" value="C:chromoplast"/>
    <property type="evidence" value="ECO:0000314"/>
    <property type="project" value="UniProtKB"/>
</dbReference>
<dbReference type="GO" id="GO:0016020">
    <property type="term" value="C:membrane"/>
    <property type="evidence" value="ECO:0007669"/>
    <property type="project" value="UniProtKB-SubCell"/>
</dbReference>
<dbReference type="GO" id="GO:0016166">
    <property type="term" value="F:phytoene dehydrogenase activity"/>
    <property type="evidence" value="ECO:0000314"/>
    <property type="project" value="UniProtKB"/>
</dbReference>
<dbReference type="GO" id="GO:0016120">
    <property type="term" value="P:carotene biosynthetic process"/>
    <property type="evidence" value="ECO:0000314"/>
    <property type="project" value="UniProtKB"/>
</dbReference>
<dbReference type="GO" id="GO:0016117">
    <property type="term" value="P:carotenoid biosynthetic process"/>
    <property type="evidence" value="ECO:0007669"/>
    <property type="project" value="UniProtKB-KW"/>
</dbReference>
<dbReference type="GO" id="GO:0009635">
    <property type="term" value="P:response to herbicide"/>
    <property type="evidence" value="ECO:0007669"/>
    <property type="project" value="UniProtKB-KW"/>
</dbReference>
<dbReference type="FunFam" id="3.50.50.60:FF:000091">
    <property type="entry name" value="15-cis-phytoene desaturase, chloroplastic/chromoplastic"/>
    <property type="match status" value="1"/>
</dbReference>
<dbReference type="Gene3D" id="3.50.50.60">
    <property type="entry name" value="FAD/NAD(P)-binding domain"/>
    <property type="match status" value="1"/>
</dbReference>
<dbReference type="InterPro" id="IPR002937">
    <property type="entry name" value="Amino_oxidase"/>
</dbReference>
<dbReference type="InterPro" id="IPR036188">
    <property type="entry name" value="FAD/NAD-bd_sf"/>
</dbReference>
<dbReference type="InterPro" id="IPR014102">
    <property type="entry name" value="Phytoene_desaturase"/>
</dbReference>
<dbReference type="InterPro" id="IPR050464">
    <property type="entry name" value="Zeta_carotene_desat/Oxidored"/>
</dbReference>
<dbReference type="NCBIfam" id="TIGR02731">
    <property type="entry name" value="phytoene_desat"/>
    <property type="match status" value="1"/>
</dbReference>
<dbReference type="PANTHER" id="PTHR42923:SF45">
    <property type="entry name" value="15-CIS-PHYTOENE DESATURASE, CHLOROPLASTIC_CHROMOPLASTIC"/>
    <property type="match status" value="1"/>
</dbReference>
<dbReference type="PANTHER" id="PTHR42923">
    <property type="entry name" value="PROTOPORPHYRINOGEN OXIDASE"/>
    <property type="match status" value="1"/>
</dbReference>
<dbReference type="Pfam" id="PF01593">
    <property type="entry name" value="Amino_oxidase"/>
    <property type="match status" value="1"/>
</dbReference>
<dbReference type="SUPFAM" id="SSF51905">
    <property type="entry name" value="FAD/NAD(P)-binding domain"/>
    <property type="match status" value="1"/>
</dbReference>
<feature type="transit peptide" description="Chloroplast and chromoplast" evidence="2">
    <location>
        <begin position="1"/>
        <end position="110"/>
    </location>
</feature>
<feature type="chain" id="PRO_0000006323" description="15-cis-phytoene desaturase, chloroplastic/chromoplastic">
    <location>
        <begin position="111"/>
        <end position="582"/>
    </location>
</feature>
<feature type="binding site" evidence="1">
    <location>
        <begin position="140"/>
        <end position="141"/>
    </location>
    <ligand>
        <name>FAD</name>
        <dbReference type="ChEBI" id="CHEBI:57692"/>
    </ligand>
</feature>
<feature type="binding site" evidence="1">
    <location>
        <position position="148"/>
    </location>
    <ligand>
        <name>FAD</name>
        <dbReference type="ChEBI" id="CHEBI:57692"/>
    </ligand>
</feature>
<feature type="binding site" evidence="1">
    <location>
        <begin position="165"/>
        <end position="166"/>
    </location>
    <ligand>
        <name>FAD</name>
        <dbReference type="ChEBI" id="CHEBI:57692"/>
    </ligand>
</feature>
<feature type="binding site" evidence="1">
    <location>
        <position position="171"/>
    </location>
    <ligand>
        <name>FAD</name>
        <dbReference type="ChEBI" id="CHEBI:57692"/>
    </ligand>
</feature>
<feature type="binding site" evidence="1">
    <location>
        <position position="306"/>
    </location>
    <ligand>
        <name>substrate</name>
    </ligand>
</feature>
<feature type="binding site" evidence="1">
    <location>
        <position position="348"/>
    </location>
    <ligand>
        <name>FAD</name>
        <dbReference type="ChEBI" id="CHEBI:57692"/>
    </ligand>
</feature>
<feature type="binding site" evidence="1">
    <location>
        <position position="537"/>
    </location>
    <ligand>
        <name>FAD</name>
        <dbReference type="ChEBI" id="CHEBI:57692"/>
    </ligand>
</feature>
<feature type="binding site" evidence="1">
    <location>
        <position position="545"/>
    </location>
    <ligand>
        <name>substrate</name>
    </ligand>
</feature>
<feature type="binding site" evidence="1">
    <location>
        <position position="547"/>
    </location>
    <ligand>
        <name>FAD</name>
        <dbReference type="ChEBI" id="CHEBI:57692"/>
    </ligand>
</feature>
<reference key="1">
    <citation type="journal article" date="1992" name="Eur. J. Biochem.">
        <title>Characterization and molecular cloning of a flavoprotein catalyzing the synthesis of phytofluene and zeta-carotene in Capsicum chromoplasts.</title>
        <authorList>
            <person name="Hugueney P."/>
            <person name="Roemer S."/>
            <person name="Kuntz M."/>
            <person name="Camara B."/>
        </authorList>
    </citation>
    <scope>NUCLEOTIDE SEQUENCE [MRNA]</scope>
    <scope>FUNCTION</scope>
    <scope>CATALYTIC ACTIVITY</scope>
    <scope>COFACTOR</scope>
    <scope>SUBCELLULAR LOCATION</scope>
    <scope>DEVELOPMENTAL STAGE</scope>
    <source>
        <strain>cv. Lamuyo</strain>
    </source>
</reference>
<reference key="2">
    <citation type="journal article" date="2005" name="Planta">
        <title>zeta-Carotene cis isomers as products and substrates in the plant poly-cis carotenoid biosynthetic pathway to lycopene.</title>
        <authorList>
            <person name="Breitenbach J."/>
            <person name="Sandmann G."/>
        </authorList>
    </citation>
    <scope>FUNCTION</scope>
    <scope>CATALYTIC ACTIVITY</scope>
    <scope>PATHWAY</scope>
</reference>
<accession>P80093</accession>
<organism>
    <name type="scientific">Capsicum annuum</name>
    <name type="common">Capsicum pepper</name>
    <dbReference type="NCBI Taxonomy" id="4072"/>
    <lineage>
        <taxon>Eukaryota</taxon>
        <taxon>Viridiplantae</taxon>
        <taxon>Streptophyta</taxon>
        <taxon>Embryophyta</taxon>
        <taxon>Tracheophyta</taxon>
        <taxon>Spermatophyta</taxon>
        <taxon>Magnoliopsida</taxon>
        <taxon>eudicotyledons</taxon>
        <taxon>Gunneridae</taxon>
        <taxon>Pentapetalae</taxon>
        <taxon>asterids</taxon>
        <taxon>lamiids</taxon>
        <taxon>Solanales</taxon>
        <taxon>Solanaceae</taxon>
        <taxon>Solanoideae</taxon>
        <taxon>Capsiceae</taxon>
        <taxon>Capsicum</taxon>
    </lineage>
</organism>
<proteinExistence type="evidence at protein level"/>
<comment type="function">
    <text evidence="3 4">Converts phytoene into zeta-carotene via the intermediary of phytofluene by the symmetrical introduction of two double bonds at the C-11 and C-11' positions of phytoene with a concomitant isomerization of two neighboring double bonds at the C9 and C9' positions from trans to cis.</text>
</comment>
<comment type="catalytic activity">
    <reaction evidence="3 4">
        <text>2 a plastoquinone + 15-cis-phytoene = 9,9',15-tri-cis-zeta-carotene + 2 a plastoquinol</text>
        <dbReference type="Rhea" id="RHEA:30287"/>
        <dbReference type="Rhea" id="RHEA-COMP:9561"/>
        <dbReference type="Rhea" id="RHEA-COMP:9562"/>
        <dbReference type="ChEBI" id="CHEBI:17757"/>
        <dbReference type="ChEBI" id="CHEBI:27787"/>
        <dbReference type="ChEBI" id="CHEBI:48717"/>
        <dbReference type="ChEBI" id="CHEBI:62192"/>
        <dbReference type="EC" id="1.3.5.5"/>
    </reaction>
</comment>
<comment type="cofactor">
    <cofactor evidence="3">
        <name>FAD</name>
        <dbReference type="ChEBI" id="CHEBI:57692"/>
    </cofactor>
</comment>
<comment type="activity regulation">
    <text>Inhibited by the herbicides metflurazon, difunone, fluridone and diflufenican.</text>
</comment>
<comment type="pathway">
    <text>Carotenoid biosynthesis; lycopene biosynthesis.</text>
</comment>
<comment type="subunit">
    <text evidence="1">Homotetramer.</text>
</comment>
<comment type="subcellular location">
    <subcellularLocation>
        <location>Plastid</location>
        <location>Chloroplast</location>
    </subcellularLocation>
    <subcellularLocation>
        <location evidence="3">Plastid</location>
        <location evidence="3">Chromoplast</location>
    </subcellularLocation>
    <subcellularLocation>
        <location evidence="3">Membrane</location>
        <topology evidence="1">Peripheral membrane protein</topology>
    </subcellularLocation>
</comment>
<comment type="developmental stage">
    <text evidence="3">Ripening fruit.</text>
</comment>
<comment type="similarity">
    <text evidence="5">Belongs to the carotenoid/retinoid oxidoreductase family.</text>
</comment>
<sequence>MPQIGLVSAVNLRVQGNSAYLWSSRSSLGTDSQDGCSQRNSLCFGGSDSMSHRLKIRNPHSITRRLAKDFRPLKVVCIDYPRPELDNTVNYLEAAFLSSSFRSSPRPTKPLEIVIAGAGLGGLSTAKYLADAGHKPILLEARDVLGGKVAAWKDDDGDWYETGLHIFFGAYPNMQNLFGELGINDRLQWKEHSMIFAMPNKPGEFSRFDFPEALPAPLNGILAILKNNEMLTWPEKVKFAIGLLPAMLGGQSYVEAQDGISVKDWMRKQGVPDRVTDEVFIAMSKALNFINPDELSMQCILIALNRFLQEKHGSKMAFLDGNPPERLCMPIVEHIESKGGQVRLNSRIKKIELNEDGSVKCFILNDGSTIEGDAFVFATPVDIFKLLLPEDWKEIPYFQKLEKLVGVPVINVHIWFDRKLKNTSDNLLFSRSPLLSVYADMSVTCKEYYDPNKSMLELVFAPAEEWVSRSDSEIIDATMKELAKLFPDEISADQSKAKILKYHVVKTPRSVYKTVPGCEPCRLLQRSPVEGFYLAGDYTKQKYLASMEGAVLSGKLCAQAIVQDYELLVGRSQRKLAETSVV</sequence>
<gene>
    <name type="primary">PDS</name>
</gene>
<protein>
    <recommendedName>
        <fullName evidence="5">15-cis-phytoene desaturase, chloroplastic/chromoplastic</fullName>
        <ecNumber evidence="3 4">1.3.5.5</ecNumber>
    </recommendedName>
    <alternativeName>
        <fullName evidence="5">Phytoene dehydrogenase</fullName>
    </alternativeName>
    <alternativeName>
        <fullName evidence="5">Phytoene desaturase</fullName>
    </alternativeName>
</protein>